<accession>Q0SQF1</accession>
<evidence type="ECO:0000255" key="1">
    <source>
        <dbReference type="HAMAP-Rule" id="MF_01342"/>
    </source>
</evidence>
<evidence type="ECO:0000305" key="2"/>
<gene>
    <name evidence="1" type="primary">rplP</name>
    <name type="ordered locus">CPR_2392</name>
</gene>
<sequence>MLMPKRVKHRKVQRGRMKGKATRGNFLAYGDFGIQATTCGWITSNQIEAARIAINRYIRRGGKLWIKIFPDKPVTEKPAETRMGSGKGSVEYWVAVVKPGRVLFELSGVDEEKAREAMRLASHKLPVKTKFVTRRDFEEMGGEE</sequence>
<reference key="1">
    <citation type="journal article" date="2006" name="Genome Res.">
        <title>Skewed genomic variability in strains of the toxigenic bacterial pathogen, Clostridium perfringens.</title>
        <authorList>
            <person name="Myers G.S.A."/>
            <person name="Rasko D.A."/>
            <person name="Cheung J.K."/>
            <person name="Ravel J."/>
            <person name="Seshadri R."/>
            <person name="DeBoy R.T."/>
            <person name="Ren Q."/>
            <person name="Varga J."/>
            <person name="Awad M.M."/>
            <person name="Brinkac L.M."/>
            <person name="Daugherty S.C."/>
            <person name="Haft D.H."/>
            <person name="Dodson R.J."/>
            <person name="Madupu R."/>
            <person name="Nelson W.C."/>
            <person name="Rosovitz M.J."/>
            <person name="Sullivan S.A."/>
            <person name="Khouri H."/>
            <person name="Dimitrov G.I."/>
            <person name="Watkins K.L."/>
            <person name="Mulligan S."/>
            <person name="Benton J."/>
            <person name="Radune D."/>
            <person name="Fisher D.J."/>
            <person name="Atkins H.S."/>
            <person name="Hiscox T."/>
            <person name="Jost B.H."/>
            <person name="Billington S.J."/>
            <person name="Songer J.G."/>
            <person name="McClane B.A."/>
            <person name="Titball R.W."/>
            <person name="Rood J.I."/>
            <person name="Melville S.B."/>
            <person name="Paulsen I.T."/>
        </authorList>
    </citation>
    <scope>NUCLEOTIDE SEQUENCE [LARGE SCALE GENOMIC DNA]</scope>
    <source>
        <strain>SM101 / Type A</strain>
    </source>
</reference>
<comment type="function">
    <text evidence="1">Binds 23S rRNA and is also seen to make contacts with the A and possibly P site tRNAs.</text>
</comment>
<comment type="subunit">
    <text evidence="1">Part of the 50S ribosomal subunit.</text>
</comment>
<comment type="similarity">
    <text evidence="1">Belongs to the universal ribosomal protein uL16 family.</text>
</comment>
<protein>
    <recommendedName>
        <fullName evidence="1">Large ribosomal subunit protein uL16</fullName>
    </recommendedName>
    <alternativeName>
        <fullName evidence="2">50S ribosomal protein L16</fullName>
    </alternativeName>
</protein>
<feature type="chain" id="PRO_1000054611" description="Large ribosomal subunit protein uL16">
    <location>
        <begin position="1"/>
        <end position="144"/>
    </location>
</feature>
<organism>
    <name type="scientific">Clostridium perfringens (strain SM101 / Type A)</name>
    <dbReference type="NCBI Taxonomy" id="289380"/>
    <lineage>
        <taxon>Bacteria</taxon>
        <taxon>Bacillati</taxon>
        <taxon>Bacillota</taxon>
        <taxon>Clostridia</taxon>
        <taxon>Eubacteriales</taxon>
        <taxon>Clostridiaceae</taxon>
        <taxon>Clostridium</taxon>
    </lineage>
</organism>
<proteinExistence type="inferred from homology"/>
<keyword id="KW-0687">Ribonucleoprotein</keyword>
<keyword id="KW-0689">Ribosomal protein</keyword>
<keyword id="KW-0694">RNA-binding</keyword>
<keyword id="KW-0699">rRNA-binding</keyword>
<keyword id="KW-0820">tRNA-binding</keyword>
<name>RL16_CLOPS</name>
<dbReference type="EMBL" id="CP000312">
    <property type="protein sequence ID" value="ABG87468.1"/>
    <property type="molecule type" value="Genomic_DNA"/>
</dbReference>
<dbReference type="RefSeq" id="WP_003454381.1">
    <property type="nucleotide sequence ID" value="NZ_CAXVKH010000004.1"/>
</dbReference>
<dbReference type="SMR" id="Q0SQF1"/>
<dbReference type="GeneID" id="93001016"/>
<dbReference type="KEGG" id="cpr:CPR_2392"/>
<dbReference type="Proteomes" id="UP000001824">
    <property type="component" value="Chromosome"/>
</dbReference>
<dbReference type="GO" id="GO:0022625">
    <property type="term" value="C:cytosolic large ribosomal subunit"/>
    <property type="evidence" value="ECO:0007669"/>
    <property type="project" value="TreeGrafter"/>
</dbReference>
<dbReference type="GO" id="GO:0019843">
    <property type="term" value="F:rRNA binding"/>
    <property type="evidence" value="ECO:0007669"/>
    <property type="project" value="UniProtKB-UniRule"/>
</dbReference>
<dbReference type="GO" id="GO:0003735">
    <property type="term" value="F:structural constituent of ribosome"/>
    <property type="evidence" value="ECO:0007669"/>
    <property type="project" value="InterPro"/>
</dbReference>
<dbReference type="GO" id="GO:0000049">
    <property type="term" value="F:tRNA binding"/>
    <property type="evidence" value="ECO:0007669"/>
    <property type="project" value="UniProtKB-KW"/>
</dbReference>
<dbReference type="GO" id="GO:0006412">
    <property type="term" value="P:translation"/>
    <property type="evidence" value="ECO:0007669"/>
    <property type="project" value="UniProtKB-UniRule"/>
</dbReference>
<dbReference type="CDD" id="cd01433">
    <property type="entry name" value="Ribosomal_L16_L10e"/>
    <property type="match status" value="1"/>
</dbReference>
<dbReference type="FunFam" id="3.90.1170.10:FF:000001">
    <property type="entry name" value="50S ribosomal protein L16"/>
    <property type="match status" value="1"/>
</dbReference>
<dbReference type="Gene3D" id="3.90.1170.10">
    <property type="entry name" value="Ribosomal protein L10e/L16"/>
    <property type="match status" value="1"/>
</dbReference>
<dbReference type="HAMAP" id="MF_01342">
    <property type="entry name" value="Ribosomal_uL16"/>
    <property type="match status" value="1"/>
</dbReference>
<dbReference type="InterPro" id="IPR047873">
    <property type="entry name" value="Ribosomal_uL16"/>
</dbReference>
<dbReference type="InterPro" id="IPR000114">
    <property type="entry name" value="Ribosomal_uL16_bact-type"/>
</dbReference>
<dbReference type="InterPro" id="IPR020798">
    <property type="entry name" value="Ribosomal_uL16_CS"/>
</dbReference>
<dbReference type="InterPro" id="IPR016180">
    <property type="entry name" value="Ribosomal_uL16_dom"/>
</dbReference>
<dbReference type="InterPro" id="IPR036920">
    <property type="entry name" value="Ribosomal_uL16_sf"/>
</dbReference>
<dbReference type="NCBIfam" id="TIGR01164">
    <property type="entry name" value="rplP_bact"/>
    <property type="match status" value="1"/>
</dbReference>
<dbReference type="PANTHER" id="PTHR12220">
    <property type="entry name" value="50S/60S RIBOSOMAL PROTEIN L16"/>
    <property type="match status" value="1"/>
</dbReference>
<dbReference type="PANTHER" id="PTHR12220:SF13">
    <property type="entry name" value="LARGE RIBOSOMAL SUBUNIT PROTEIN UL16M"/>
    <property type="match status" value="1"/>
</dbReference>
<dbReference type="Pfam" id="PF00252">
    <property type="entry name" value="Ribosomal_L16"/>
    <property type="match status" value="1"/>
</dbReference>
<dbReference type="PRINTS" id="PR00060">
    <property type="entry name" value="RIBOSOMALL16"/>
</dbReference>
<dbReference type="SUPFAM" id="SSF54686">
    <property type="entry name" value="Ribosomal protein L16p/L10e"/>
    <property type="match status" value="1"/>
</dbReference>
<dbReference type="PROSITE" id="PS00586">
    <property type="entry name" value="RIBOSOMAL_L16_1"/>
    <property type="match status" value="1"/>
</dbReference>
<dbReference type="PROSITE" id="PS00701">
    <property type="entry name" value="RIBOSOMAL_L16_2"/>
    <property type="match status" value="1"/>
</dbReference>